<gene>
    <name type="primary">THBS2</name>
    <name type="synonym">TSP2</name>
</gene>
<proteinExistence type="evidence at protein level"/>
<accession>P35442</accession>
<accession>A6H8N1</accession>
<accession>A7E232</accession>
<accession>Q5RI52</accession>
<sequence length="1172" mass="129991">MVWRLVLLALWVWPSTQAGHQDKDTTFDLFSISNINRKTIGAKQFRGPDPGVPAYRFVRFDYIPPVNADDLSKITKIMRQKEGFFLTAQLKQDGKSRGTLLALEGPGLSQRQFEIVSNGPADTLDLTYWIDGTRHVVSLEDVGLADSQWKNVTVQVAGETYSLHVGCDLIDSFALDEPFYEHLQAEKSRMYVAKGSARESHFRGLLQNVHLVFENSVEDILSKKGCQQGQGAEINAISENTETLRLGPHVTTEYVGPSSERRPEVCERSCEELGNMVQELSGLHVLVNQLSENLKRVSNDNQFLWELIGGPPKTRNMSACWQDGRFFAENETWVVDSCTTCTCKKFKTICHQITCPPATCASPSFVEGECCPSCLHSVDGEEGWSPWAEWTQCSVTCGSGTQQRGRSCDVTSNTCLGPSIQTRACSLSKCDTRIRQDGGWSHWSPWSSCSVTCGVGNITRIRLCNSPVPQMGGKNCKGSGRETKACQGAPCPIDGRWSPWSPWSACTVTCAGGIRERTRVCNSPEPQYGGKACVGDVQERQMCNKRSCPVDGCLSNPCFPGAQCSSFPDGSWSCGSCPVGFLGNGTHCEDLDECALVPDICFSTSKVPRCVNTQPGFHCLPCPPRYRGNQPVGVGLEAAKTEKQVCEPENPCKDKTHNCHKHAECIYLGHFSDPMYKCECQTGYAGDGLICGEDSDLDGWPNLNLVCATNATYHCIKDNCPHLPNSGQEDFDKDGIGDACDDDDDNDGVTDEKDNCQLLFNPRQADYDKDEVGDRCDNCPYVHNPAQIDTDNNGEGDACSVDIDGDDVFNERDNCPYVYNTDQRDTDGDGVGDHCDNCPLVHNPDQTDVDNDLVGDQCDNNEDIDDDGHQNNQDNCPYISNANQADHDRDGQGDACDPDDDNDGVPDDRDNCRLVFNPDQEDLDGDGRGDICKDDFDNDNIPDIDDVCPENNAISETDFRNFQMVPLDPKGTTQIDPNWVIRHQGKELVQTANSDPGIAVGFDEFGSVDFSGTFYVNTDRDDDYAGFVFGYQSSSRFYVVMWKQVTQTYWEDQPTRAYGYSGVSLKVVNSTTGTGEHLRNALWHTGNTPGQVRTLWHDPRNIGWKDYTAYRWHLTHRPKTGYIRVLVHEGKQVMADSGPIYDQTYAGGRLGLFVFSQEMVYFSDLKYECRDI</sequence>
<protein>
    <recommendedName>
        <fullName>Thrombospondin-2</fullName>
    </recommendedName>
</protein>
<name>TSP2_HUMAN</name>
<comment type="function">
    <text evidence="13">Adhesive glycoprotein that mediates cell-to-cell and cell-to-matrix interactions. Ligand for CD36 mediating antiangiogenic properties.</text>
</comment>
<comment type="subunit">
    <text evidence="1 8 9 10">Homotrimer; disulfide-linked. Interacts (via the TSP type I repeats) with CD36; the interaction conveys an antiangiogenic effect. Interacts (via the TSP type I repeats) with HRG; the interaction blocks the antiangiogenic effect of THBS2 with CD36 (By similarity). Can bind to fibrinogen, fibronectin, laminin and type V collagen.</text>
</comment>
<comment type="interaction">
    <interactant intactId="EBI-2466249">
        <id>P35442</id>
    </interactant>
    <interactant intactId="EBI-2466294">
        <id>P54290</id>
        <label>Cacna2d1</label>
    </interactant>
    <organismsDiffer>true</organismsDiffer>
    <experiments>2</experiments>
</comment>
<comment type="tissue specificity">
    <text evidence="11">High expression in invertebral disk tissue.</text>
</comment>
<comment type="disease" evidence="11">
    <disease id="DI-01829">
        <name>Intervertebral disc disease</name>
        <acronym>IDD</acronym>
        <description>A common musculo-skeletal disorder caused by degeneration of intervertebral disks of the lumbar spine. It results in low-back pain and unilateral leg pain.</description>
        <dbReference type="MIM" id="603932"/>
    </disease>
    <text>Disease susceptibility is associated with variants affecting the gene represented in this entry.</text>
</comment>
<comment type="disease" evidence="14">
    <disease id="DI-06915">
        <name>Ehlers-Danlos syndrome, classic-like, 3</name>
        <acronym>EDSCLL3</acronym>
        <description>A form of Ehlers-Danlos syndrome, a group of connective tissue disorders characterized by skin hyperextensibility, articular hypermobility, and tissue fragility. EDSCLL3 is an autosomal dominant form. Affected individuals have joint hypermobility, frequent joint dislocations, atrophic scarring, prolonged bleeding time and age-related aortic dilatation and rupture.</description>
        <dbReference type="MIM" id="620865"/>
    </disease>
    <text>The disease is caused by variants affecting the gene represented in this entry.</text>
</comment>
<comment type="similarity">
    <text evidence="15">Belongs to the thrombospondin family.</text>
</comment>
<comment type="online information" name="Atlas of Genetics and Cytogenetics in Oncology and Haematology">
    <link uri="https://atlasgeneticsoncology.org/gene/42549/THBS2"/>
</comment>
<organism>
    <name type="scientific">Homo sapiens</name>
    <name type="common">Human</name>
    <dbReference type="NCBI Taxonomy" id="9606"/>
    <lineage>
        <taxon>Eukaryota</taxon>
        <taxon>Metazoa</taxon>
        <taxon>Chordata</taxon>
        <taxon>Craniata</taxon>
        <taxon>Vertebrata</taxon>
        <taxon>Euteleostomi</taxon>
        <taxon>Mammalia</taxon>
        <taxon>Eutheria</taxon>
        <taxon>Euarchontoglires</taxon>
        <taxon>Primates</taxon>
        <taxon>Haplorrhini</taxon>
        <taxon>Catarrhini</taxon>
        <taxon>Hominidae</taxon>
        <taxon>Homo</taxon>
    </lineage>
</organism>
<dbReference type="EMBL" id="L12350">
    <property type="protein sequence ID" value="AAA03703.1"/>
    <property type="molecule type" value="mRNA"/>
</dbReference>
<dbReference type="EMBL" id="M81339">
    <property type="status" value="NOT_ANNOTATED_CDS"/>
    <property type="molecule type" value="mRNA"/>
</dbReference>
<dbReference type="EMBL" id="AK292429">
    <property type="protein sequence ID" value="BAF85118.1"/>
    <property type="molecule type" value="mRNA"/>
</dbReference>
<dbReference type="EMBL" id="BX322234">
    <property type="status" value="NOT_ANNOTATED_CDS"/>
    <property type="molecule type" value="Genomic_DNA"/>
</dbReference>
<dbReference type="EMBL" id="CH471051">
    <property type="protein sequence ID" value="EAW47455.1"/>
    <property type="molecule type" value="Genomic_DNA"/>
</dbReference>
<dbReference type="EMBL" id="BC146676">
    <property type="protein sequence ID" value="AAI46677.1"/>
    <property type="molecule type" value="mRNA"/>
</dbReference>
<dbReference type="EMBL" id="BC150175">
    <property type="protein sequence ID" value="AAI50176.1"/>
    <property type="molecule type" value="mRNA"/>
</dbReference>
<dbReference type="CCDS" id="CCDS34574.1"/>
<dbReference type="PIR" id="A47379">
    <property type="entry name" value="TSHUP2"/>
</dbReference>
<dbReference type="RefSeq" id="NP_003238.2">
    <property type="nucleotide sequence ID" value="NM_003247.3"/>
</dbReference>
<dbReference type="RefSeq" id="XP_054212261.1">
    <property type="nucleotide sequence ID" value="XM_054356286.1"/>
</dbReference>
<dbReference type="PDB" id="1YO8">
    <property type="method" value="X-ray"/>
    <property type="resolution" value="2.60 A"/>
    <property type="chains" value="A=551-1172"/>
</dbReference>
<dbReference type="PDB" id="2RHP">
    <property type="method" value="X-ray"/>
    <property type="resolution" value="2.90 A"/>
    <property type="chains" value="A=551-1172"/>
</dbReference>
<dbReference type="PDBsum" id="1YO8"/>
<dbReference type="PDBsum" id="2RHP"/>
<dbReference type="SMR" id="P35442"/>
<dbReference type="BioGRID" id="112916">
    <property type="interactions" value="24"/>
</dbReference>
<dbReference type="ComplexPortal" id="CPX-1788">
    <property type="entry name" value="Thrombospondin 2 complex"/>
</dbReference>
<dbReference type="CORUM" id="P35442"/>
<dbReference type="FunCoup" id="P35442">
    <property type="interactions" value="669"/>
</dbReference>
<dbReference type="IntAct" id="P35442">
    <property type="interactions" value="13"/>
</dbReference>
<dbReference type="STRING" id="9606.ENSP00000355751"/>
<dbReference type="GlyConnect" id="1805">
    <property type="glycosylation" value="24 N-Linked glycans (4 sites)"/>
</dbReference>
<dbReference type="GlyCosmos" id="P35442">
    <property type="glycosylation" value="7 sites, 23 glycans"/>
</dbReference>
<dbReference type="GlyGen" id="P35442">
    <property type="glycosylation" value="11 sites, 75 N-linked glycans (4 sites), 1 O-linked glycan (4 sites)"/>
</dbReference>
<dbReference type="iPTMnet" id="P35442"/>
<dbReference type="PhosphoSitePlus" id="P35442"/>
<dbReference type="BioMuta" id="THBS2"/>
<dbReference type="DMDM" id="215273908"/>
<dbReference type="CPTAC" id="CPTAC-1186"/>
<dbReference type="jPOST" id="P35442"/>
<dbReference type="MassIVE" id="P35442"/>
<dbReference type="PaxDb" id="9606-ENSP00000355751"/>
<dbReference type="PeptideAtlas" id="P35442"/>
<dbReference type="ProteomicsDB" id="55062"/>
<dbReference type="Antibodypedia" id="33564">
    <property type="antibodies" value="236 antibodies from 26 providers"/>
</dbReference>
<dbReference type="DNASU" id="7058"/>
<dbReference type="Ensembl" id="ENST00000366787.7">
    <property type="protein sequence ID" value="ENSP00000355751.3"/>
    <property type="gene ID" value="ENSG00000186340.17"/>
</dbReference>
<dbReference type="Ensembl" id="ENST00000617924.6">
    <property type="protein sequence ID" value="ENSP00000482784.1"/>
    <property type="gene ID" value="ENSG00000186340.17"/>
</dbReference>
<dbReference type="Ensembl" id="ENST00000676498.1">
    <property type="protein sequence ID" value="ENSP00000504820.1"/>
    <property type="gene ID" value="ENSG00000186340.17"/>
</dbReference>
<dbReference type="Ensembl" id="ENST00000676760.1">
    <property type="protein sequence ID" value="ENSP00000503020.1"/>
    <property type="gene ID" value="ENSG00000186340.17"/>
</dbReference>
<dbReference type="GeneID" id="7058"/>
<dbReference type="KEGG" id="hsa:7058"/>
<dbReference type="MANE-Select" id="ENST00000617924.6">
    <property type="protein sequence ID" value="ENSP00000482784.1"/>
    <property type="RefSeq nucleotide sequence ID" value="NM_003247.5"/>
    <property type="RefSeq protein sequence ID" value="NP_003238.2"/>
</dbReference>
<dbReference type="UCSC" id="uc003qwt.5">
    <property type="organism name" value="human"/>
</dbReference>
<dbReference type="AGR" id="HGNC:11786"/>
<dbReference type="CTD" id="7058"/>
<dbReference type="DisGeNET" id="7058"/>
<dbReference type="GeneCards" id="THBS2"/>
<dbReference type="HGNC" id="HGNC:11786">
    <property type="gene designation" value="THBS2"/>
</dbReference>
<dbReference type="HPA" id="ENSG00000186340">
    <property type="expression patterns" value="Low tissue specificity"/>
</dbReference>
<dbReference type="MalaCards" id="THBS2"/>
<dbReference type="MIM" id="188061">
    <property type="type" value="gene"/>
</dbReference>
<dbReference type="MIM" id="603932">
    <property type="type" value="phenotype"/>
</dbReference>
<dbReference type="MIM" id="620865">
    <property type="type" value="phenotype"/>
</dbReference>
<dbReference type="neXtProt" id="NX_P35442"/>
<dbReference type="OpenTargets" id="ENSG00000186340"/>
<dbReference type="PharmGKB" id="PA36498"/>
<dbReference type="VEuPathDB" id="HostDB:ENSG00000186340"/>
<dbReference type="eggNOG" id="ENOG502QRK8">
    <property type="taxonomic scope" value="Eukaryota"/>
</dbReference>
<dbReference type="GeneTree" id="ENSGT00940000157846"/>
<dbReference type="HOGENOM" id="CLU_009257_0_0_1"/>
<dbReference type="InParanoid" id="P35442"/>
<dbReference type="OMA" id="MPGVMLQ"/>
<dbReference type="OrthoDB" id="14563at2759"/>
<dbReference type="PAN-GO" id="P35442">
    <property type="GO annotations" value="2 GO annotations based on evolutionary models"/>
</dbReference>
<dbReference type="PhylomeDB" id="P35442"/>
<dbReference type="TreeFam" id="TF324917"/>
<dbReference type="PathwayCommons" id="P35442"/>
<dbReference type="Reactome" id="R-HSA-186797">
    <property type="pathway name" value="Signaling by PDGF"/>
</dbReference>
<dbReference type="Reactome" id="R-HSA-5083635">
    <property type="pathway name" value="Defective B3GALTL causes PpS"/>
</dbReference>
<dbReference type="Reactome" id="R-HSA-5173214">
    <property type="pathway name" value="O-glycosylation of TSR domain-containing proteins"/>
</dbReference>
<dbReference type="SignaLink" id="P35442"/>
<dbReference type="SIGNOR" id="P35442"/>
<dbReference type="BioGRID-ORCS" id="7058">
    <property type="hits" value="10 hits in 1154 CRISPR screens"/>
</dbReference>
<dbReference type="ChiTaRS" id="THBS2">
    <property type="organism name" value="human"/>
</dbReference>
<dbReference type="EvolutionaryTrace" id="P35442"/>
<dbReference type="GeneWiki" id="THBS2"/>
<dbReference type="GenomeRNAi" id="7058"/>
<dbReference type="Pharos" id="P35442">
    <property type="development level" value="Tbio"/>
</dbReference>
<dbReference type="PRO" id="PR:P35442"/>
<dbReference type="Proteomes" id="UP000005640">
    <property type="component" value="Chromosome 6"/>
</dbReference>
<dbReference type="RNAct" id="P35442">
    <property type="molecule type" value="protein"/>
</dbReference>
<dbReference type="Bgee" id="ENSG00000186340">
    <property type="expression patterns" value="Expressed in pericardium and 190 other cell types or tissues"/>
</dbReference>
<dbReference type="ExpressionAtlas" id="P35442">
    <property type="expression patterns" value="baseline and differential"/>
</dbReference>
<dbReference type="GO" id="GO:0005604">
    <property type="term" value="C:basement membrane"/>
    <property type="evidence" value="ECO:0007669"/>
    <property type="project" value="Ensembl"/>
</dbReference>
<dbReference type="GO" id="GO:0062023">
    <property type="term" value="C:collagen-containing extracellular matrix"/>
    <property type="evidence" value="ECO:0007005"/>
    <property type="project" value="BHF-UCL"/>
</dbReference>
<dbReference type="GO" id="GO:0005576">
    <property type="term" value="C:extracellular region"/>
    <property type="evidence" value="ECO:0007005"/>
    <property type="project" value="BHF-UCL"/>
</dbReference>
<dbReference type="GO" id="GO:0031091">
    <property type="term" value="C:platelet alpha granule"/>
    <property type="evidence" value="ECO:0000314"/>
    <property type="project" value="UniProtKB"/>
</dbReference>
<dbReference type="GO" id="GO:0005509">
    <property type="term" value="F:calcium ion binding"/>
    <property type="evidence" value="ECO:0007669"/>
    <property type="project" value="InterPro"/>
</dbReference>
<dbReference type="GO" id="GO:0008201">
    <property type="term" value="F:heparin binding"/>
    <property type="evidence" value="ECO:0000304"/>
    <property type="project" value="ProtInc"/>
</dbReference>
<dbReference type="GO" id="GO:0007155">
    <property type="term" value="P:cell adhesion"/>
    <property type="evidence" value="ECO:0007669"/>
    <property type="project" value="UniProtKB-KW"/>
</dbReference>
<dbReference type="GO" id="GO:0016525">
    <property type="term" value="P:negative regulation of angiogenesis"/>
    <property type="evidence" value="ECO:0000314"/>
    <property type="project" value="UniProtKB"/>
</dbReference>
<dbReference type="GO" id="GO:0051965">
    <property type="term" value="P:positive regulation of synapse assembly"/>
    <property type="evidence" value="ECO:0007669"/>
    <property type="project" value="Ensembl"/>
</dbReference>
<dbReference type="FunFam" id="2.20.100.10:FF:000004">
    <property type="entry name" value="Adhesion G protein-coupled receptor B2"/>
    <property type="match status" value="1"/>
</dbReference>
<dbReference type="FunFam" id="4.10.1080.10:FF:000004">
    <property type="entry name" value="Cartilage oligomeric matrix protein"/>
    <property type="match status" value="1"/>
</dbReference>
<dbReference type="FunFam" id="2.20.100.10:FF:000007">
    <property type="entry name" value="Thrombospondin 1"/>
    <property type="match status" value="2"/>
</dbReference>
<dbReference type="FunFam" id="2.60.120.200:FF:000009">
    <property type="entry name" value="Thrombospondin 1"/>
    <property type="match status" value="1"/>
</dbReference>
<dbReference type="FunFam" id="2.10.25.10:FF:000070">
    <property type="entry name" value="Thrombospondin 2"/>
    <property type="match status" value="1"/>
</dbReference>
<dbReference type="FunFam" id="2.60.120.200:FF:000067">
    <property type="entry name" value="Thrombospondin 2"/>
    <property type="match status" value="1"/>
</dbReference>
<dbReference type="FunFam" id="2.10.25.10:FF:000025">
    <property type="entry name" value="Thrombospondin 3"/>
    <property type="match status" value="1"/>
</dbReference>
<dbReference type="FunFam" id="2.10.25.10:FF:000027">
    <property type="entry name" value="Thrombospondin 3"/>
    <property type="match status" value="1"/>
</dbReference>
<dbReference type="FunFam" id="4.10.1080.10:FF:000001">
    <property type="entry name" value="Thrombospondin 3"/>
    <property type="match status" value="1"/>
</dbReference>
<dbReference type="FunFam" id="4.10.1080.10:FF:000002">
    <property type="entry name" value="Thrombospondin 3"/>
    <property type="match status" value="1"/>
</dbReference>
<dbReference type="Gene3D" id="2.60.120.200">
    <property type="match status" value="2"/>
</dbReference>
<dbReference type="Gene3D" id="6.20.200.20">
    <property type="match status" value="1"/>
</dbReference>
<dbReference type="Gene3D" id="2.10.25.10">
    <property type="entry name" value="Laminin"/>
    <property type="match status" value="3"/>
</dbReference>
<dbReference type="Gene3D" id="2.20.100.10">
    <property type="entry name" value="Thrombospondin type-1 (TSP1) repeat"/>
    <property type="match status" value="3"/>
</dbReference>
<dbReference type="Gene3D" id="4.10.1080.10">
    <property type="entry name" value="TSP type-3 repeat"/>
    <property type="match status" value="2"/>
</dbReference>
<dbReference type="InterPro" id="IPR013320">
    <property type="entry name" value="ConA-like_dom_sf"/>
</dbReference>
<dbReference type="InterPro" id="IPR001881">
    <property type="entry name" value="EGF-like_Ca-bd_dom"/>
</dbReference>
<dbReference type="InterPro" id="IPR000742">
    <property type="entry name" value="EGF-like_dom"/>
</dbReference>
<dbReference type="InterPro" id="IPR024731">
    <property type="entry name" value="EGF_dom"/>
</dbReference>
<dbReference type="InterPro" id="IPR003367">
    <property type="entry name" value="Thrombospondin_3-like_rpt"/>
</dbReference>
<dbReference type="InterPro" id="IPR017897">
    <property type="entry name" value="Thrombospondin_3_rpt"/>
</dbReference>
<dbReference type="InterPro" id="IPR008859">
    <property type="entry name" value="Thrombospondin_C"/>
</dbReference>
<dbReference type="InterPro" id="IPR000884">
    <property type="entry name" value="TSP1_rpt"/>
</dbReference>
<dbReference type="InterPro" id="IPR036383">
    <property type="entry name" value="TSP1_rpt_sf"/>
</dbReference>
<dbReference type="InterPro" id="IPR028974">
    <property type="entry name" value="TSP_type-3_rpt"/>
</dbReference>
<dbReference type="InterPro" id="IPR048287">
    <property type="entry name" value="TSPN-like_N"/>
</dbReference>
<dbReference type="InterPro" id="IPR001007">
    <property type="entry name" value="VWF_dom"/>
</dbReference>
<dbReference type="PANTHER" id="PTHR10199">
    <property type="entry name" value="THROMBOSPONDIN"/>
    <property type="match status" value="1"/>
</dbReference>
<dbReference type="PANTHER" id="PTHR10199:SF10">
    <property type="entry name" value="THROMBOSPONDIN-2"/>
    <property type="match status" value="1"/>
</dbReference>
<dbReference type="Pfam" id="PF12947">
    <property type="entry name" value="EGF_3"/>
    <property type="match status" value="1"/>
</dbReference>
<dbReference type="Pfam" id="PF00090">
    <property type="entry name" value="TSP_1"/>
    <property type="match status" value="3"/>
</dbReference>
<dbReference type="Pfam" id="PF02412">
    <property type="entry name" value="TSP_3"/>
    <property type="match status" value="6"/>
</dbReference>
<dbReference type="Pfam" id="PF05735">
    <property type="entry name" value="TSP_C"/>
    <property type="match status" value="1"/>
</dbReference>
<dbReference type="Pfam" id="PF00093">
    <property type="entry name" value="VWC"/>
    <property type="match status" value="1"/>
</dbReference>
<dbReference type="PRINTS" id="PR01705">
    <property type="entry name" value="TSP1REPEAT"/>
</dbReference>
<dbReference type="SMART" id="SM00181">
    <property type="entry name" value="EGF"/>
    <property type="match status" value="3"/>
</dbReference>
<dbReference type="SMART" id="SM00179">
    <property type="entry name" value="EGF_CA"/>
    <property type="match status" value="2"/>
</dbReference>
<dbReference type="SMART" id="SM00209">
    <property type="entry name" value="TSP1"/>
    <property type="match status" value="3"/>
</dbReference>
<dbReference type="SMART" id="SM00210">
    <property type="entry name" value="TSPN"/>
    <property type="match status" value="1"/>
</dbReference>
<dbReference type="SMART" id="SM00214">
    <property type="entry name" value="VWC"/>
    <property type="match status" value="1"/>
</dbReference>
<dbReference type="SUPFAM" id="SSF49899">
    <property type="entry name" value="Concanavalin A-like lectins/glucanases"/>
    <property type="match status" value="2"/>
</dbReference>
<dbReference type="SUPFAM" id="SSF57196">
    <property type="entry name" value="EGF/Laminin"/>
    <property type="match status" value="1"/>
</dbReference>
<dbReference type="SUPFAM" id="SSF57603">
    <property type="entry name" value="FnI-like domain"/>
    <property type="match status" value="1"/>
</dbReference>
<dbReference type="SUPFAM" id="SSF103647">
    <property type="entry name" value="TSP type-3 repeat"/>
    <property type="match status" value="3"/>
</dbReference>
<dbReference type="SUPFAM" id="SSF82895">
    <property type="entry name" value="TSP-1 type 1 repeat"/>
    <property type="match status" value="3"/>
</dbReference>
<dbReference type="PROSITE" id="PS01186">
    <property type="entry name" value="EGF_2"/>
    <property type="match status" value="1"/>
</dbReference>
<dbReference type="PROSITE" id="PS50026">
    <property type="entry name" value="EGF_3"/>
    <property type="match status" value="2"/>
</dbReference>
<dbReference type="PROSITE" id="PS50092">
    <property type="entry name" value="TSP1"/>
    <property type="match status" value="3"/>
</dbReference>
<dbReference type="PROSITE" id="PS51234">
    <property type="entry name" value="TSP3"/>
    <property type="match status" value="8"/>
</dbReference>
<dbReference type="PROSITE" id="PS51236">
    <property type="entry name" value="TSP_CTER"/>
    <property type="match status" value="1"/>
</dbReference>
<dbReference type="PROSITE" id="PS01208">
    <property type="entry name" value="VWFC_1"/>
    <property type="match status" value="1"/>
</dbReference>
<dbReference type="PROSITE" id="PS50184">
    <property type="entry name" value="VWFC_2"/>
    <property type="match status" value="1"/>
</dbReference>
<reference key="1">
    <citation type="journal article" date="1993" name="Genomics">
        <title>Sequence and characterization of the complete human thrombospondin 2 cDNA: potential regulatory role for the 3' untranslated region.</title>
        <authorList>
            <person name="Labell T.L."/>
            <person name="Byers P.H."/>
        </authorList>
    </citation>
    <scope>NUCLEOTIDE SEQUENCE [MRNA]</scope>
</reference>
<reference key="2">
    <citation type="journal article" date="2004" name="Nat. Genet.">
        <title>Complete sequencing and characterization of 21,243 full-length human cDNAs.</title>
        <authorList>
            <person name="Ota T."/>
            <person name="Suzuki Y."/>
            <person name="Nishikawa T."/>
            <person name="Otsuki T."/>
            <person name="Sugiyama T."/>
            <person name="Irie R."/>
            <person name="Wakamatsu A."/>
            <person name="Hayashi K."/>
            <person name="Sato H."/>
            <person name="Nagai K."/>
            <person name="Kimura K."/>
            <person name="Makita H."/>
            <person name="Sekine M."/>
            <person name="Obayashi M."/>
            <person name="Nishi T."/>
            <person name="Shibahara T."/>
            <person name="Tanaka T."/>
            <person name="Ishii S."/>
            <person name="Yamamoto J."/>
            <person name="Saito K."/>
            <person name="Kawai Y."/>
            <person name="Isono Y."/>
            <person name="Nakamura Y."/>
            <person name="Nagahari K."/>
            <person name="Murakami K."/>
            <person name="Yasuda T."/>
            <person name="Iwayanagi T."/>
            <person name="Wagatsuma M."/>
            <person name="Shiratori A."/>
            <person name="Sudo H."/>
            <person name="Hosoiri T."/>
            <person name="Kaku Y."/>
            <person name="Kodaira H."/>
            <person name="Kondo H."/>
            <person name="Sugawara M."/>
            <person name="Takahashi M."/>
            <person name="Kanda K."/>
            <person name="Yokoi T."/>
            <person name="Furuya T."/>
            <person name="Kikkawa E."/>
            <person name="Omura Y."/>
            <person name="Abe K."/>
            <person name="Kamihara K."/>
            <person name="Katsuta N."/>
            <person name="Sato K."/>
            <person name="Tanikawa M."/>
            <person name="Yamazaki M."/>
            <person name="Ninomiya K."/>
            <person name="Ishibashi T."/>
            <person name="Yamashita H."/>
            <person name="Murakawa K."/>
            <person name="Fujimori K."/>
            <person name="Tanai H."/>
            <person name="Kimata M."/>
            <person name="Watanabe M."/>
            <person name="Hiraoka S."/>
            <person name="Chiba Y."/>
            <person name="Ishida S."/>
            <person name="Ono Y."/>
            <person name="Takiguchi S."/>
            <person name="Watanabe S."/>
            <person name="Yosida M."/>
            <person name="Hotuta T."/>
            <person name="Kusano J."/>
            <person name="Kanehori K."/>
            <person name="Takahashi-Fujii A."/>
            <person name="Hara H."/>
            <person name="Tanase T.-O."/>
            <person name="Nomura Y."/>
            <person name="Togiya S."/>
            <person name="Komai F."/>
            <person name="Hara R."/>
            <person name="Takeuchi K."/>
            <person name="Arita M."/>
            <person name="Imose N."/>
            <person name="Musashino K."/>
            <person name="Yuuki H."/>
            <person name="Oshima A."/>
            <person name="Sasaki N."/>
            <person name="Aotsuka S."/>
            <person name="Yoshikawa Y."/>
            <person name="Matsunawa H."/>
            <person name="Ichihara T."/>
            <person name="Shiohata N."/>
            <person name="Sano S."/>
            <person name="Moriya S."/>
            <person name="Momiyama H."/>
            <person name="Satoh N."/>
            <person name="Takami S."/>
            <person name="Terashima Y."/>
            <person name="Suzuki O."/>
            <person name="Nakagawa S."/>
            <person name="Senoh A."/>
            <person name="Mizoguchi H."/>
            <person name="Goto Y."/>
            <person name="Shimizu F."/>
            <person name="Wakebe H."/>
            <person name="Hishigaki H."/>
            <person name="Watanabe T."/>
            <person name="Sugiyama A."/>
            <person name="Takemoto M."/>
            <person name="Kawakami B."/>
            <person name="Yamazaki M."/>
            <person name="Watanabe K."/>
            <person name="Kumagai A."/>
            <person name="Itakura S."/>
            <person name="Fukuzumi Y."/>
            <person name="Fujimori Y."/>
            <person name="Komiyama M."/>
            <person name="Tashiro H."/>
            <person name="Tanigami A."/>
            <person name="Fujiwara T."/>
            <person name="Ono T."/>
            <person name="Yamada K."/>
            <person name="Fujii Y."/>
            <person name="Ozaki K."/>
            <person name="Hirao M."/>
            <person name="Ohmori Y."/>
            <person name="Kawabata A."/>
            <person name="Hikiji T."/>
            <person name="Kobatake N."/>
            <person name="Inagaki H."/>
            <person name="Ikema Y."/>
            <person name="Okamoto S."/>
            <person name="Okitani R."/>
            <person name="Kawakami T."/>
            <person name="Noguchi S."/>
            <person name="Itoh T."/>
            <person name="Shigeta K."/>
            <person name="Senba T."/>
            <person name="Matsumura K."/>
            <person name="Nakajima Y."/>
            <person name="Mizuno T."/>
            <person name="Morinaga M."/>
            <person name="Sasaki M."/>
            <person name="Togashi T."/>
            <person name="Oyama M."/>
            <person name="Hata H."/>
            <person name="Watanabe M."/>
            <person name="Komatsu T."/>
            <person name="Mizushima-Sugano J."/>
            <person name="Satoh T."/>
            <person name="Shirai Y."/>
            <person name="Takahashi Y."/>
            <person name="Nakagawa K."/>
            <person name="Okumura K."/>
            <person name="Nagase T."/>
            <person name="Nomura N."/>
            <person name="Kikuchi H."/>
            <person name="Masuho Y."/>
            <person name="Yamashita R."/>
            <person name="Nakai K."/>
            <person name="Yada T."/>
            <person name="Nakamura Y."/>
            <person name="Ohara O."/>
            <person name="Isogai T."/>
            <person name="Sugano S."/>
        </authorList>
    </citation>
    <scope>NUCLEOTIDE SEQUENCE [LARGE SCALE MRNA]</scope>
    <source>
        <tissue>Testis</tissue>
    </source>
</reference>
<reference key="3">
    <citation type="journal article" date="2003" name="Nature">
        <title>The DNA sequence and analysis of human chromosome 6.</title>
        <authorList>
            <person name="Mungall A.J."/>
            <person name="Palmer S.A."/>
            <person name="Sims S.K."/>
            <person name="Edwards C.A."/>
            <person name="Ashurst J.L."/>
            <person name="Wilming L."/>
            <person name="Jones M.C."/>
            <person name="Horton R."/>
            <person name="Hunt S.E."/>
            <person name="Scott C.E."/>
            <person name="Gilbert J.G.R."/>
            <person name="Clamp M.E."/>
            <person name="Bethel G."/>
            <person name="Milne S."/>
            <person name="Ainscough R."/>
            <person name="Almeida J.P."/>
            <person name="Ambrose K.D."/>
            <person name="Andrews T.D."/>
            <person name="Ashwell R.I.S."/>
            <person name="Babbage A.K."/>
            <person name="Bagguley C.L."/>
            <person name="Bailey J."/>
            <person name="Banerjee R."/>
            <person name="Barker D.J."/>
            <person name="Barlow K.F."/>
            <person name="Bates K."/>
            <person name="Beare D.M."/>
            <person name="Beasley H."/>
            <person name="Beasley O."/>
            <person name="Bird C.P."/>
            <person name="Blakey S.E."/>
            <person name="Bray-Allen S."/>
            <person name="Brook J."/>
            <person name="Brown A.J."/>
            <person name="Brown J.Y."/>
            <person name="Burford D.C."/>
            <person name="Burrill W."/>
            <person name="Burton J."/>
            <person name="Carder C."/>
            <person name="Carter N.P."/>
            <person name="Chapman J.C."/>
            <person name="Clark S.Y."/>
            <person name="Clark G."/>
            <person name="Clee C.M."/>
            <person name="Clegg S."/>
            <person name="Cobley V."/>
            <person name="Collier R.E."/>
            <person name="Collins J.E."/>
            <person name="Colman L.K."/>
            <person name="Corby N.R."/>
            <person name="Coville G.J."/>
            <person name="Culley K.M."/>
            <person name="Dhami P."/>
            <person name="Davies J."/>
            <person name="Dunn M."/>
            <person name="Earthrowl M.E."/>
            <person name="Ellington A.E."/>
            <person name="Evans K.A."/>
            <person name="Faulkner L."/>
            <person name="Francis M.D."/>
            <person name="Frankish A."/>
            <person name="Frankland J."/>
            <person name="French L."/>
            <person name="Garner P."/>
            <person name="Garnett J."/>
            <person name="Ghori M.J."/>
            <person name="Gilby L.M."/>
            <person name="Gillson C.J."/>
            <person name="Glithero R.J."/>
            <person name="Grafham D.V."/>
            <person name="Grant M."/>
            <person name="Gribble S."/>
            <person name="Griffiths C."/>
            <person name="Griffiths M.N.D."/>
            <person name="Hall R."/>
            <person name="Halls K.S."/>
            <person name="Hammond S."/>
            <person name="Harley J.L."/>
            <person name="Hart E.A."/>
            <person name="Heath P.D."/>
            <person name="Heathcott R."/>
            <person name="Holmes S.J."/>
            <person name="Howden P.J."/>
            <person name="Howe K.L."/>
            <person name="Howell G.R."/>
            <person name="Huckle E."/>
            <person name="Humphray S.J."/>
            <person name="Humphries M.D."/>
            <person name="Hunt A.R."/>
            <person name="Johnson C.M."/>
            <person name="Joy A.A."/>
            <person name="Kay M."/>
            <person name="Keenan S.J."/>
            <person name="Kimberley A.M."/>
            <person name="King A."/>
            <person name="Laird G.K."/>
            <person name="Langford C."/>
            <person name="Lawlor S."/>
            <person name="Leongamornlert D.A."/>
            <person name="Leversha M."/>
            <person name="Lloyd C.R."/>
            <person name="Lloyd D.M."/>
            <person name="Loveland J.E."/>
            <person name="Lovell J."/>
            <person name="Martin S."/>
            <person name="Mashreghi-Mohammadi M."/>
            <person name="Maslen G.L."/>
            <person name="Matthews L."/>
            <person name="McCann O.T."/>
            <person name="McLaren S.J."/>
            <person name="McLay K."/>
            <person name="McMurray A."/>
            <person name="Moore M.J.F."/>
            <person name="Mullikin J.C."/>
            <person name="Niblett D."/>
            <person name="Nickerson T."/>
            <person name="Novik K.L."/>
            <person name="Oliver K."/>
            <person name="Overton-Larty E.K."/>
            <person name="Parker A."/>
            <person name="Patel R."/>
            <person name="Pearce A.V."/>
            <person name="Peck A.I."/>
            <person name="Phillimore B.J.C.T."/>
            <person name="Phillips S."/>
            <person name="Plumb R.W."/>
            <person name="Porter K.M."/>
            <person name="Ramsey Y."/>
            <person name="Ranby S.A."/>
            <person name="Rice C.M."/>
            <person name="Ross M.T."/>
            <person name="Searle S.M."/>
            <person name="Sehra H.K."/>
            <person name="Sheridan E."/>
            <person name="Skuce C.D."/>
            <person name="Smith S."/>
            <person name="Smith M."/>
            <person name="Spraggon L."/>
            <person name="Squares S.L."/>
            <person name="Steward C.A."/>
            <person name="Sycamore N."/>
            <person name="Tamlyn-Hall G."/>
            <person name="Tester J."/>
            <person name="Theaker A.J."/>
            <person name="Thomas D.W."/>
            <person name="Thorpe A."/>
            <person name="Tracey A."/>
            <person name="Tromans A."/>
            <person name="Tubby B."/>
            <person name="Wall M."/>
            <person name="Wallis J.M."/>
            <person name="West A.P."/>
            <person name="White S.S."/>
            <person name="Whitehead S.L."/>
            <person name="Whittaker H."/>
            <person name="Wild A."/>
            <person name="Willey D.J."/>
            <person name="Wilmer T.E."/>
            <person name="Wood J.M."/>
            <person name="Wray P.W."/>
            <person name="Wyatt J.C."/>
            <person name="Young L."/>
            <person name="Younger R.M."/>
            <person name="Bentley D.R."/>
            <person name="Coulson A."/>
            <person name="Durbin R.M."/>
            <person name="Hubbard T."/>
            <person name="Sulston J.E."/>
            <person name="Dunham I."/>
            <person name="Rogers J."/>
            <person name="Beck S."/>
        </authorList>
    </citation>
    <scope>NUCLEOTIDE SEQUENCE [LARGE SCALE GENOMIC DNA]</scope>
</reference>
<reference key="4">
    <citation type="submission" date="2005-09" db="EMBL/GenBank/DDBJ databases">
        <authorList>
            <person name="Mural R.J."/>
            <person name="Istrail S."/>
            <person name="Sutton G.G."/>
            <person name="Florea L."/>
            <person name="Halpern A.L."/>
            <person name="Mobarry C.M."/>
            <person name="Lippert R."/>
            <person name="Walenz B."/>
            <person name="Shatkay H."/>
            <person name="Dew I."/>
            <person name="Miller J.R."/>
            <person name="Flanigan M.J."/>
            <person name="Edwards N.J."/>
            <person name="Bolanos R."/>
            <person name="Fasulo D."/>
            <person name="Halldorsson B.V."/>
            <person name="Hannenhalli S."/>
            <person name="Turner R."/>
            <person name="Yooseph S."/>
            <person name="Lu F."/>
            <person name="Nusskern D.R."/>
            <person name="Shue B.C."/>
            <person name="Zheng X.H."/>
            <person name="Zhong F."/>
            <person name="Delcher A.L."/>
            <person name="Huson D.H."/>
            <person name="Kravitz S.A."/>
            <person name="Mouchard L."/>
            <person name="Reinert K."/>
            <person name="Remington K.A."/>
            <person name="Clark A.G."/>
            <person name="Waterman M.S."/>
            <person name="Eichler E.E."/>
            <person name="Adams M.D."/>
            <person name="Hunkapiller M.W."/>
            <person name="Myers E.W."/>
            <person name="Venter J.C."/>
        </authorList>
    </citation>
    <scope>NUCLEOTIDE SEQUENCE [LARGE SCALE GENOMIC DNA]</scope>
</reference>
<reference key="5">
    <citation type="journal article" date="2004" name="Genome Res.">
        <title>The status, quality, and expansion of the NIH full-length cDNA project: the Mammalian Gene Collection (MGC).</title>
        <authorList>
            <consortium name="The MGC Project Team"/>
        </authorList>
    </citation>
    <scope>NUCLEOTIDE SEQUENCE [LARGE SCALE MRNA]</scope>
</reference>
<reference key="6">
    <citation type="journal article" date="1992" name="Genomics">
        <title>Thrombospondin II: partial cDNA sequence, chromosome location, and expression of a second member of the thrombospondin gene family in humans.</title>
        <authorList>
            <person name="Labell T.L."/>
            <person name="McGookey Milewicz D.J."/>
            <person name="Disteche C.M."/>
            <person name="Byers P.H."/>
        </authorList>
    </citation>
    <scope>NUCLEOTIDE SEQUENCE [MRNA] OF 560-1172</scope>
    <source>
        <tissue>Fibroblast</tissue>
    </source>
</reference>
<reference key="7">
    <citation type="journal article" date="1992" name="Biochem. Biophys. Res. Commun.">
        <title>Thrombospondin sequence motif (CSVTCG) is responsible for CD36 binding.</title>
        <authorList>
            <person name="Asch A.S."/>
            <person name="Silbiger S."/>
            <person name="Heimer E."/>
            <person name="Nachman R.L."/>
        </authorList>
    </citation>
    <scope>INTERACTION WITH THBS1 AND THBS2</scope>
</reference>
<reference key="8">
    <citation type="journal article" date="2001" name="J. Biol. Chem.">
        <title>Disulfide connectivity of recombinant C-terminal region of human thrombospondin 2.</title>
        <authorList>
            <person name="Misenheimer T.M."/>
            <person name="Hahr A.J."/>
            <person name="Harms A.C."/>
            <person name="Annis D.S."/>
            <person name="Mosher D.F."/>
        </authorList>
    </citation>
    <scope>DISULFIDE BONDS IN THROMBOSPONDIN DOMAIN</scope>
</reference>
<reference key="9">
    <citation type="journal article" date="2008" name="Am. J. Hum. Genet.">
        <title>A functional polymorphism in THBS2 that affects alternative splicing and MMP binding is associated with lumbar-disc herniation.</title>
        <authorList>
            <person name="Hirose Y."/>
            <person name="Chiba K."/>
            <person name="Karasugi T."/>
            <person name="Nakajima M."/>
            <person name="Kawaguchi Y."/>
            <person name="Mikami Y."/>
            <person name="Furuichi T."/>
            <person name="Mio F."/>
            <person name="Miyake A."/>
            <person name="Miyamoto T."/>
            <person name="Ozaki K."/>
            <person name="Takahashi A."/>
            <person name="Mizuta H."/>
            <person name="Kubo T."/>
            <person name="Kimura T."/>
            <person name="Tanaka T."/>
            <person name="Toyama Y."/>
            <person name="Ikegawa S."/>
        </authorList>
    </citation>
    <scope>INVOLVEMENT IN SUSCEPTIBILITY TO IDD</scope>
    <scope>TISSUE SPECIFICITY</scope>
</reference>
<reference key="10">
    <citation type="journal article" date="2011" name="Breast Cancer Res. Treat.">
        <title>CD36-mediated activation of endothelial cell apoptosis by an N-terminal recombinant fragment of thrombospondin-2 inhibits breast cancer growth and metastasis in vivo.</title>
        <authorList>
            <person name="Koch M."/>
            <person name="Hussein F."/>
            <person name="Woeste A."/>
            <person name="Grundker C."/>
            <person name="Frontzek K."/>
            <person name="Emons G."/>
            <person name="Hawighorst T."/>
        </authorList>
    </citation>
    <scope>FUNCTION</scope>
</reference>
<reference key="11">
    <citation type="journal article" date="2005" name="Nat. Struct. Mol. Biol.">
        <title>Structure of the calcium-rich signature domain of human thrombospondin-2.</title>
        <authorList>
            <person name="Carlson C.B."/>
            <person name="Bernstein D.A."/>
            <person name="Annis D.S."/>
            <person name="Misenheimer T.M."/>
            <person name="Hannah B.L."/>
            <person name="Mosher D.F."/>
            <person name="Keck J.L."/>
        </authorList>
    </citation>
    <scope>X-RAY CRYSTALLOGRAPHY (2.6 ANGSTROMS) OF 551-1172 IN COMPLEX WITH CALCIUM IONS</scope>
    <scope>DISULFIDE BONDS</scope>
    <scope>GLYCOSYLATION AT ASN-584; ASN-710 AND ASN-1069</scope>
</reference>
<reference key="12">
    <citation type="journal article" date="2008" name="J. Biol. Chem.">
        <title>Influences of the N700S thrombospondin-1 polymorphism on protein structure and stability.</title>
        <authorList>
            <person name="Carlson C.B."/>
            <person name="Liu Y."/>
            <person name="Keck J.L."/>
            <person name="Mosher D.F."/>
        </authorList>
    </citation>
    <scope>X-RAY CRYSTALLOGRAPHY (2.9 ANGSTROMS) OF 551-1172</scope>
    <scope>MUTAGENESIS OF ASN-702</scope>
</reference>
<reference key="13">
    <citation type="journal article" date="2024" name="Eur. J. Hum. Genet.">
        <title>Heterozygous THBS2 pathogenic variant causes Ehlers-Danlos syndrome with prominent vascular features in humans and mice.</title>
        <authorList>
            <person name="Hadar N."/>
            <person name="Porgador O."/>
            <person name="Cohen I."/>
            <person name="Levi H."/>
            <person name="Dolgin V."/>
            <person name="Yogev Y."/>
            <person name="Sued-Hendrickson S."/>
            <person name="Shelef I."/>
            <person name="Didkovsky E."/>
            <person name="Eskin-Schwartz M."/>
            <person name="Birk O.S."/>
        </authorList>
    </citation>
    <scope>INVOLVEMENT IN EDSCLL3</scope>
    <scope>VARIANT EDSCLL3 ARG-896</scope>
</reference>
<keyword id="KW-0002">3D-structure</keyword>
<keyword id="KW-0106">Calcium</keyword>
<keyword id="KW-0130">Cell adhesion</keyword>
<keyword id="KW-0225">Disease variant</keyword>
<keyword id="KW-1015">Disulfide bond</keyword>
<keyword id="KW-0245">EGF-like domain</keyword>
<keyword id="KW-0248">Ehlers-Danlos syndrome</keyword>
<keyword id="KW-0325">Glycoprotein</keyword>
<keyword id="KW-0358">Heparin-binding</keyword>
<keyword id="KW-1267">Proteomics identification</keyword>
<keyword id="KW-1185">Reference proteome</keyword>
<keyword id="KW-0677">Repeat</keyword>
<keyword id="KW-0732">Signal</keyword>
<evidence type="ECO:0000250" key="1"/>
<evidence type="ECO:0000255" key="2"/>
<evidence type="ECO:0000255" key="3">
    <source>
        <dbReference type="PROSITE-ProRule" id="PRU00076"/>
    </source>
</evidence>
<evidence type="ECO:0000255" key="4">
    <source>
        <dbReference type="PROSITE-ProRule" id="PRU00210"/>
    </source>
</evidence>
<evidence type="ECO:0000255" key="5">
    <source>
        <dbReference type="PROSITE-ProRule" id="PRU00220"/>
    </source>
</evidence>
<evidence type="ECO:0000255" key="6">
    <source>
        <dbReference type="PROSITE-ProRule" id="PRU00635"/>
    </source>
</evidence>
<evidence type="ECO:0000256" key="7">
    <source>
        <dbReference type="SAM" id="MobiDB-lite"/>
    </source>
</evidence>
<evidence type="ECO:0000269" key="8">
    <source>
    </source>
</evidence>
<evidence type="ECO:0000269" key="9">
    <source>
    </source>
</evidence>
<evidence type="ECO:0000269" key="10">
    <source>
    </source>
</evidence>
<evidence type="ECO:0000269" key="11">
    <source>
    </source>
</evidence>
<evidence type="ECO:0000269" key="12">
    <source>
    </source>
</evidence>
<evidence type="ECO:0000269" key="13">
    <source>
    </source>
</evidence>
<evidence type="ECO:0000269" key="14">
    <source>
    </source>
</evidence>
<evidence type="ECO:0000305" key="15"/>
<evidence type="ECO:0007744" key="16">
    <source>
        <dbReference type="PDB" id="1YO8"/>
    </source>
</evidence>
<evidence type="ECO:0007744" key="17">
    <source>
        <dbReference type="PDB" id="2RHP"/>
    </source>
</evidence>
<evidence type="ECO:0007829" key="18">
    <source>
        <dbReference type="PDB" id="1YO8"/>
    </source>
</evidence>
<evidence type="ECO:0007829" key="19">
    <source>
        <dbReference type="PDB" id="2RHP"/>
    </source>
</evidence>
<feature type="signal peptide" evidence="2">
    <location>
        <begin position="1"/>
        <end position="18"/>
    </location>
</feature>
<feature type="chain" id="PRO_0000035846" description="Thrombospondin-2">
    <location>
        <begin position="19"/>
        <end position="1172"/>
    </location>
</feature>
<feature type="domain" description="Laminin G-like">
    <location>
        <begin position="19"/>
        <end position="215"/>
    </location>
</feature>
<feature type="domain" description="VWFC" evidence="5">
    <location>
        <begin position="318"/>
        <end position="375"/>
    </location>
</feature>
<feature type="domain" description="TSP type-1 1" evidence="4">
    <location>
        <begin position="381"/>
        <end position="431"/>
    </location>
</feature>
<feature type="domain" description="TSP type-1 2" evidence="4">
    <location>
        <begin position="437"/>
        <end position="492"/>
    </location>
</feature>
<feature type="domain" description="TSP type-1 3" evidence="4">
    <location>
        <begin position="494"/>
        <end position="549"/>
    </location>
</feature>
<feature type="domain" description="EGF-like 1" evidence="3">
    <location>
        <begin position="549"/>
        <end position="589"/>
    </location>
</feature>
<feature type="domain" description="EGF-like 2" evidence="3">
    <location>
        <begin position="648"/>
        <end position="692"/>
    </location>
</feature>
<feature type="repeat" description="TSP type-3 1">
    <location>
        <begin position="693"/>
        <end position="728"/>
    </location>
</feature>
<feature type="repeat" description="TSP type-3 2">
    <location>
        <begin position="729"/>
        <end position="764"/>
    </location>
</feature>
<feature type="repeat" description="TSP type-3 3">
    <location>
        <begin position="765"/>
        <end position="787"/>
    </location>
</feature>
<feature type="repeat" description="TSP type-3 4">
    <location>
        <begin position="788"/>
        <end position="823"/>
    </location>
</feature>
<feature type="repeat" description="TSP type-3 5">
    <location>
        <begin position="824"/>
        <end position="846"/>
    </location>
</feature>
<feature type="repeat" description="TSP type-3 6">
    <location>
        <begin position="847"/>
        <end position="884"/>
    </location>
</feature>
<feature type="repeat" description="TSP type-3 7">
    <location>
        <begin position="885"/>
        <end position="920"/>
    </location>
</feature>
<feature type="repeat" description="TSP type-3 8">
    <location>
        <begin position="921"/>
        <end position="956"/>
    </location>
</feature>
<feature type="domain" description="TSP C-terminal" evidence="6">
    <location>
        <begin position="960"/>
        <end position="1172"/>
    </location>
</feature>
<feature type="region of interest" description="Heparin-binding" evidence="2">
    <location>
        <begin position="19"/>
        <end position="232"/>
    </location>
</feature>
<feature type="region of interest" description="Disordered" evidence="7">
    <location>
        <begin position="843"/>
        <end position="931"/>
    </location>
</feature>
<feature type="short sequence motif" description="Cell attachment site" evidence="2">
    <location>
        <begin position="928"/>
        <end position="930"/>
    </location>
</feature>
<feature type="compositionally biased region" description="Acidic residues" evidence="7">
    <location>
        <begin position="847"/>
        <end position="866"/>
    </location>
</feature>
<feature type="compositionally biased region" description="Polar residues" evidence="7">
    <location>
        <begin position="870"/>
        <end position="884"/>
    </location>
</feature>
<feature type="compositionally biased region" description="Acidic residues" evidence="7">
    <location>
        <begin position="896"/>
        <end position="905"/>
    </location>
</feature>
<feature type="glycosylation site" description="N-linked (GlcNAc...) asparagine" evidence="2">
    <location>
        <position position="151"/>
    </location>
</feature>
<feature type="glycosylation site" description="N-linked (GlcNAc...) asparagine" evidence="2">
    <location>
        <position position="316"/>
    </location>
</feature>
<feature type="glycosylation site" description="N-linked (GlcNAc...) asparagine" evidence="2">
    <location>
        <position position="330"/>
    </location>
</feature>
<feature type="glycosylation site" description="N-linked (GlcNAc...) asparagine" evidence="2">
    <location>
        <position position="457"/>
    </location>
</feature>
<feature type="glycosylation site" description="N-linked (GlcNAc...) asparagine" evidence="10">
    <location>
        <position position="584"/>
    </location>
</feature>
<feature type="glycosylation site" description="N-linked (GlcNAc...) asparagine" evidence="10">
    <location>
        <position position="710"/>
    </location>
</feature>
<feature type="glycosylation site" description="N-linked (GlcNAc...) asparagine" evidence="10">
    <location>
        <position position="1069"/>
    </location>
</feature>
<feature type="disulfide bond" description="Interchain" evidence="15">
    <location>
        <position position="266"/>
    </location>
</feature>
<feature type="disulfide bond" description="Interchain" evidence="15">
    <location>
        <position position="270"/>
    </location>
</feature>
<feature type="disulfide bond" evidence="1">
    <location>
        <begin position="393"/>
        <end position="425"/>
    </location>
</feature>
<feature type="disulfide bond" evidence="1">
    <location>
        <begin position="397"/>
        <end position="430"/>
    </location>
</feature>
<feature type="disulfide bond" evidence="1">
    <location>
        <begin position="408"/>
        <end position="415"/>
    </location>
</feature>
<feature type="disulfide bond" evidence="1">
    <location>
        <begin position="449"/>
        <end position="486"/>
    </location>
</feature>
<feature type="disulfide bond" evidence="1">
    <location>
        <begin position="453"/>
        <end position="491"/>
    </location>
</feature>
<feature type="disulfide bond" evidence="1">
    <location>
        <begin position="464"/>
        <end position="476"/>
    </location>
</feature>
<feature type="disulfide bond" evidence="1">
    <location>
        <begin position="506"/>
        <end position="543"/>
    </location>
</feature>
<feature type="disulfide bond" evidence="1">
    <location>
        <begin position="510"/>
        <end position="548"/>
    </location>
</feature>
<feature type="disulfide bond" evidence="1">
    <location>
        <begin position="521"/>
        <end position="533"/>
    </location>
</feature>
<feature type="disulfide bond" evidence="10 12 16 17">
    <location>
        <begin position="553"/>
        <end position="564"/>
    </location>
</feature>
<feature type="disulfide bond" evidence="10 12 16 17">
    <location>
        <begin position="558"/>
        <end position="574"/>
    </location>
</feature>
<feature type="disulfide bond" evidence="10 12 16 17">
    <location>
        <begin position="577"/>
        <end position="588"/>
    </location>
</feature>
<feature type="disulfide bond" evidence="10 12 16 17">
    <location>
        <begin position="594"/>
        <end position="610"/>
    </location>
</feature>
<feature type="disulfide bond" evidence="10 12 16 17">
    <location>
        <begin position="601"/>
        <end position="619"/>
    </location>
</feature>
<feature type="disulfide bond" evidence="10 12 16 17">
    <location>
        <begin position="622"/>
        <end position="646"/>
    </location>
</feature>
<feature type="disulfide bond" evidence="10 12 16 17">
    <location>
        <begin position="652"/>
        <end position="665"/>
    </location>
</feature>
<feature type="disulfide bond" evidence="10 12 16 17">
    <location>
        <begin position="659"/>
        <end position="678"/>
    </location>
</feature>
<feature type="disulfide bond" evidence="10 12 16 17">
    <location>
        <begin position="680"/>
        <end position="691"/>
    </location>
</feature>
<feature type="disulfide bond" evidence="10 12 16 17">
    <location>
        <begin position="707"/>
        <end position="715"/>
    </location>
</feature>
<feature type="disulfide bond" evidence="10 12 16 17">
    <location>
        <begin position="720"/>
        <end position="740"/>
    </location>
</feature>
<feature type="disulfide bond" evidence="10 12 16 17">
    <location>
        <begin position="756"/>
        <end position="776"/>
    </location>
</feature>
<feature type="disulfide bond" evidence="10 12 16 17">
    <location>
        <begin position="779"/>
        <end position="799"/>
    </location>
</feature>
<feature type="disulfide bond" evidence="10 12 16 17">
    <location>
        <begin position="815"/>
        <end position="835"/>
    </location>
</feature>
<feature type="disulfide bond" evidence="10 12 16 17">
    <location>
        <begin position="838"/>
        <end position="858"/>
    </location>
</feature>
<feature type="disulfide bond" evidence="10 12 16 17">
    <location>
        <begin position="876"/>
        <end position="896"/>
    </location>
</feature>
<feature type="disulfide bond" evidence="10 12 16 17">
    <location>
        <begin position="912"/>
        <end position="932"/>
    </location>
</feature>
<feature type="disulfide bond" evidence="10 12 16 17">
    <location>
        <begin position="948"/>
        <end position="1169"/>
    </location>
</feature>
<feature type="sequence variant" id="VAR_045842" description="In dbSNP:rs36088849.">
    <original>T</original>
    <variation>S</variation>
    <location>
        <position position="133"/>
    </location>
</feature>
<feature type="sequence variant" id="VAR_045843" description="In dbSNP:rs35404985.">
    <original>L</original>
    <variation>F</variation>
    <location>
        <position position="375"/>
    </location>
</feature>
<feature type="sequence variant" id="VAR_089735" description="In EDSCLL3; likely pathogenic." evidence="14">
    <original>C</original>
    <variation>R</variation>
    <location>
        <position position="896"/>
    </location>
</feature>
<feature type="mutagenesis site" description="Alters protein stability." evidence="12">
    <original>N</original>
    <variation>S</variation>
    <location>
        <position position="702"/>
    </location>
</feature>
<feature type="sequence conflict" description="In Ref. 5; AAI50176." evidence="15" ref="5">
    <original>V</original>
    <variation>A</variation>
    <location>
        <position position="2"/>
    </location>
</feature>
<feature type="sequence conflict" description="In Ref. 1; AAA03703." evidence="15" ref="1">
    <original>DSF</original>
    <variation>GPV</variation>
    <location>
        <begin position="171"/>
        <end position="173"/>
    </location>
</feature>
<feature type="sequence conflict" description="In Ref. 1; AAA03703." evidence="15" ref="1">
    <original>S</original>
    <variation>F</variation>
    <location>
        <position position="576"/>
    </location>
</feature>
<feature type="sequence conflict" description="In Ref. 5; AAI46677." evidence="15" ref="5">
    <original>R</original>
    <variation>G</variation>
    <location>
        <position position="1111"/>
    </location>
</feature>
<feature type="helix" evidence="18">
    <location>
        <begin position="552"/>
        <end position="555"/>
    </location>
</feature>
<feature type="strand" evidence="18">
    <location>
        <begin position="564"/>
        <end position="566"/>
    </location>
</feature>
<feature type="strand" evidence="18">
    <location>
        <begin position="572"/>
        <end position="574"/>
    </location>
</feature>
<feature type="strand" evidence="18">
    <location>
        <begin position="585"/>
        <end position="587"/>
    </location>
</feature>
<feature type="turn" evidence="18">
    <location>
        <begin position="593"/>
        <end position="596"/>
    </location>
</feature>
<feature type="strand" evidence="18">
    <location>
        <begin position="605"/>
        <end position="607"/>
    </location>
</feature>
<feature type="strand" evidence="18">
    <location>
        <begin position="610"/>
        <end position="612"/>
    </location>
</feature>
<feature type="strand" evidence="18">
    <location>
        <begin position="614"/>
        <end position="619"/>
    </location>
</feature>
<feature type="strand" evidence="18">
    <location>
        <begin position="626"/>
        <end position="628"/>
    </location>
</feature>
<feature type="strand" evidence="18">
    <location>
        <begin position="632"/>
        <end position="636"/>
    </location>
</feature>
<feature type="helix" evidence="18">
    <location>
        <begin position="637"/>
        <end position="640"/>
    </location>
</feature>
<feature type="strand" evidence="18">
    <location>
        <begin position="646"/>
        <end position="648"/>
    </location>
</feature>
<feature type="turn" evidence="18">
    <location>
        <begin position="651"/>
        <end position="655"/>
    </location>
</feature>
<feature type="strand" evidence="18">
    <location>
        <begin position="663"/>
        <end position="667"/>
    </location>
</feature>
<feature type="strand" evidence="18">
    <location>
        <begin position="673"/>
        <end position="680"/>
    </location>
</feature>
<feature type="strand" evidence="18">
    <location>
        <begin position="684"/>
        <end position="693"/>
    </location>
</feature>
<feature type="strand" evidence="18">
    <location>
        <begin position="697"/>
        <end position="700"/>
    </location>
</feature>
<feature type="turn" evidence="18">
    <location>
        <begin position="706"/>
        <end position="710"/>
    </location>
</feature>
<feature type="strand" evidence="18">
    <location>
        <begin position="712"/>
        <end position="714"/>
    </location>
</feature>
<feature type="strand" evidence="18">
    <location>
        <begin position="734"/>
        <end position="736"/>
    </location>
</feature>
<feature type="turn" evidence="18">
    <location>
        <begin position="738"/>
        <end position="740"/>
    </location>
</feature>
<feature type="strand" evidence="18">
    <location>
        <begin position="746"/>
        <end position="749"/>
    </location>
</feature>
<feature type="turn" evidence="18">
    <location>
        <begin position="751"/>
        <end position="753"/>
    </location>
</feature>
<feature type="turn" evidence="19">
    <location>
        <begin position="755"/>
        <end position="758"/>
    </location>
</feature>
<feature type="strand" evidence="18">
    <location>
        <begin position="767"/>
        <end position="772"/>
    </location>
</feature>
<feature type="helix" evidence="18">
    <location>
        <begin position="774"/>
        <end position="776"/>
    </location>
</feature>
<feature type="strand" evidence="18">
    <location>
        <begin position="793"/>
        <end position="795"/>
    </location>
</feature>
<feature type="helix" evidence="18">
    <location>
        <begin position="797"/>
        <end position="799"/>
    </location>
</feature>
<feature type="strand" evidence="18">
    <location>
        <begin position="805"/>
        <end position="808"/>
    </location>
</feature>
<feature type="turn" evidence="18">
    <location>
        <begin position="810"/>
        <end position="812"/>
    </location>
</feature>
<feature type="strand" evidence="18">
    <location>
        <begin position="829"/>
        <end position="831"/>
    </location>
</feature>
<feature type="helix" evidence="18">
    <location>
        <begin position="833"/>
        <end position="835"/>
    </location>
</feature>
<feature type="strand" evidence="18">
    <location>
        <begin position="851"/>
        <end position="854"/>
    </location>
</feature>
<feature type="turn" evidence="18">
    <location>
        <begin position="856"/>
        <end position="858"/>
    </location>
</feature>
<feature type="strand" evidence="18">
    <location>
        <begin position="866"/>
        <end position="869"/>
    </location>
</feature>
<feature type="helix" evidence="18">
    <location>
        <begin position="871"/>
        <end position="873"/>
    </location>
</feature>
<feature type="strand" evidence="18">
    <location>
        <begin position="890"/>
        <end position="892"/>
    </location>
</feature>
<feature type="turn" evidence="18">
    <location>
        <begin position="894"/>
        <end position="896"/>
    </location>
</feature>
<feature type="strand" evidence="18">
    <location>
        <begin position="903"/>
        <end position="905"/>
    </location>
</feature>
<feature type="helix" evidence="18">
    <location>
        <begin position="907"/>
        <end position="909"/>
    </location>
</feature>
<feature type="turn" evidence="18">
    <location>
        <begin position="911"/>
        <end position="914"/>
    </location>
</feature>
<feature type="strand" evidence="18">
    <location>
        <begin position="926"/>
        <end position="928"/>
    </location>
</feature>
<feature type="helix" evidence="18">
    <location>
        <begin position="930"/>
        <end position="932"/>
    </location>
</feature>
<feature type="strand" evidence="18">
    <location>
        <begin position="939"/>
        <end position="941"/>
    </location>
</feature>
<feature type="helix" evidence="18">
    <location>
        <begin position="943"/>
        <end position="945"/>
    </location>
</feature>
<feature type="strand" evidence="18">
    <location>
        <begin position="960"/>
        <end position="968"/>
    </location>
</feature>
<feature type="strand" evidence="18">
    <location>
        <begin position="971"/>
        <end position="973"/>
    </location>
</feature>
<feature type="strand" evidence="18">
    <location>
        <begin position="979"/>
        <end position="982"/>
    </location>
</feature>
<feature type="helix" evidence="18">
    <location>
        <begin position="983"/>
        <end position="985"/>
    </location>
</feature>
<feature type="strand" evidence="18">
    <location>
        <begin position="987"/>
        <end position="990"/>
    </location>
</feature>
<feature type="strand" evidence="18">
    <location>
        <begin position="995"/>
        <end position="1016"/>
    </location>
</feature>
<feature type="strand" evidence="18">
    <location>
        <begin position="1024"/>
        <end position="1033"/>
    </location>
</feature>
<feature type="strand" evidence="18">
    <location>
        <begin position="1036"/>
        <end position="1045"/>
    </location>
</feature>
<feature type="strand" evidence="18">
    <location>
        <begin position="1053"/>
        <end position="1055"/>
    </location>
</feature>
<feature type="strand" evidence="18">
    <location>
        <begin position="1061"/>
        <end position="1069"/>
    </location>
</feature>
<feature type="helix" evidence="18">
    <location>
        <begin position="1076"/>
        <end position="1083"/>
    </location>
</feature>
<feature type="strand" evidence="18">
    <location>
        <begin position="1084"/>
        <end position="1086"/>
    </location>
</feature>
<feature type="turn" evidence="18">
    <location>
        <begin position="1089"/>
        <end position="1091"/>
    </location>
</feature>
<feature type="strand" evidence="18">
    <location>
        <begin position="1092"/>
        <end position="1097"/>
    </location>
</feature>
<feature type="strand" evidence="18">
    <location>
        <begin position="1110"/>
        <end position="1116"/>
    </location>
</feature>
<feature type="turn" evidence="18">
    <location>
        <begin position="1118"/>
        <end position="1120"/>
    </location>
</feature>
<feature type="strand" evidence="18">
    <location>
        <begin position="1122"/>
        <end position="1129"/>
    </location>
</feature>
<feature type="strand" evidence="18">
    <location>
        <begin position="1132"/>
        <end position="1136"/>
    </location>
</feature>
<feature type="strand" evidence="19">
    <location>
        <begin position="1139"/>
        <end position="1141"/>
    </location>
</feature>
<feature type="strand" evidence="18">
    <location>
        <begin position="1148"/>
        <end position="1156"/>
    </location>
</feature>
<feature type="strand" evidence="18">
    <location>
        <begin position="1159"/>
        <end position="1169"/>
    </location>
</feature>